<evidence type="ECO:0000255" key="1"/>
<evidence type="ECO:0000256" key="2">
    <source>
        <dbReference type="SAM" id="MobiDB-lite"/>
    </source>
</evidence>
<evidence type="ECO:0000269" key="3">
    <source>
    </source>
</evidence>
<evidence type="ECO:0000305" key="4"/>
<evidence type="ECO:0000312" key="5">
    <source>
        <dbReference type="HGNC" id="HGNC:33293"/>
    </source>
</evidence>
<dbReference type="EMBL" id="AC008162">
    <property type="status" value="NOT_ANNOTATED_CDS"/>
    <property type="molecule type" value="Genomic_DNA"/>
</dbReference>
<dbReference type="CCDS" id="CCDS48161.1"/>
<dbReference type="RefSeq" id="NP_001139190.1">
    <property type="nucleotide sequence ID" value="NM_001145718.3"/>
</dbReference>
<dbReference type="FunCoup" id="P0C2W7">
    <property type="interactions" value="1"/>
</dbReference>
<dbReference type="STRING" id="9606.ENSP00000360360"/>
<dbReference type="BioMuta" id="CT47B1"/>
<dbReference type="DMDM" id="146286097"/>
<dbReference type="MassIVE" id="P0C2W7"/>
<dbReference type="PaxDb" id="9606-ENSP00000360360"/>
<dbReference type="PeptideAtlas" id="P0C2W7"/>
<dbReference type="ProteomicsDB" id="52306"/>
<dbReference type="Antibodypedia" id="70794">
    <property type="antibodies" value="12 antibodies from 7 providers"/>
</dbReference>
<dbReference type="DNASU" id="643311"/>
<dbReference type="Ensembl" id="ENST00000371311.5">
    <property type="protein sequence ID" value="ENSP00000360360.3"/>
    <property type="gene ID" value="ENSG00000236446.4"/>
</dbReference>
<dbReference type="Ensembl" id="ENST00000672355.1">
    <property type="protein sequence ID" value="ENSP00000500741.1"/>
    <property type="gene ID" value="ENSG00000288466.1"/>
</dbReference>
<dbReference type="GeneID" id="643311"/>
<dbReference type="KEGG" id="hsa:643311"/>
<dbReference type="MANE-Select" id="ENST00000371311.5">
    <property type="protein sequence ID" value="ENSP00000360360.3"/>
    <property type="RefSeq nucleotide sequence ID" value="NM_001145718.3"/>
    <property type="RefSeq protein sequence ID" value="NP_001139190.1"/>
</dbReference>
<dbReference type="UCSC" id="uc011muc.3">
    <property type="organism name" value="human"/>
</dbReference>
<dbReference type="AGR" id="HGNC:33293"/>
<dbReference type="CTD" id="643311"/>
<dbReference type="GeneCards" id="CT47B1"/>
<dbReference type="HGNC" id="HGNC:33293">
    <property type="gene designation" value="CT47B1"/>
</dbReference>
<dbReference type="HPA" id="ENSG00000236446">
    <property type="expression patterns" value="Tissue enriched (testis)"/>
</dbReference>
<dbReference type="MIM" id="300790">
    <property type="type" value="gene"/>
</dbReference>
<dbReference type="neXtProt" id="NX_P0C2W7"/>
<dbReference type="OpenTargets" id="ENSG00000236446"/>
<dbReference type="PharmGKB" id="PA164718327"/>
<dbReference type="VEuPathDB" id="HostDB:ENSG00000236446"/>
<dbReference type="eggNOG" id="ENOG502TF73">
    <property type="taxonomic scope" value="Eukaryota"/>
</dbReference>
<dbReference type="GeneTree" id="ENSGT00390000002253"/>
<dbReference type="HOGENOM" id="CLU_083200_0_0_1"/>
<dbReference type="InParanoid" id="P0C2W7"/>
<dbReference type="OMA" id="YHNDHIQ"/>
<dbReference type="OrthoDB" id="9486425at2759"/>
<dbReference type="PAN-GO" id="P0C2W7">
    <property type="GO annotations" value="0 GO annotations based on evolutionary models"/>
</dbReference>
<dbReference type="PhylomeDB" id="P0C2W7"/>
<dbReference type="TreeFam" id="TF342556"/>
<dbReference type="PathwayCommons" id="P0C2W7"/>
<dbReference type="BioGRID-ORCS" id="643311">
    <property type="hits" value="8 hits in 737 CRISPR screens"/>
</dbReference>
<dbReference type="GenomeRNAi" id="643311"/>
<dbReference type="Pharos" id="P0C2W7">
    <property type="development level" value="Tdark"/>
</dbReference>
<dbReference type="PRO" id="PR:P0C2W7"/>
<dbReference type="Proteomes" id="UP000005640">
    <property type="component" value="Chromosome X"/>
</dbReference>
<dbReference type="RNAct" id="P0C2W7">
    <property type="molecule type" value="protein"/>
</dbReference>
<dbReference type="Bgee" id="ENSG00000236446">
    <property type="expression patterns" value="Expressed in male germ line stem cell (sensu Vertebrata) in testis and 4 other cell types or tissues"/>
</dbReference>
<dbReference type="InterPro" id="IPR028930">
    <property type="entry name" value="CT47"/>
</dbReference>
<dbReference type="PANTHER" id="PTHR32157:SF5">
    <property type="entry name" value="CANCER_TESTIS ANTIGEN FAMILY 47 MEMBER B1"/>
    <property type="match status" value="1"/>
</dbReference>
<dbReference type="PANTHER" id="PTHR32157">
    <property type="entry name" value="GENE 6268-RELATED"/>
    <property type="match status" value="1"/>
</dbReference>
<dbReference type="Pfam" id="PF15623">
    <property type="entry name" value="CT47"/>
    <property type="match status" value="1"/>
</dbReference>
<protein>
    <recommendedName>
        <fullName evidence="4">Cancer/testis antigen family 47 member B1</fullName>
    </recommendedName>
    <alternativeName>
        <fullName>Cancer/testis antigen 47.13</fullName>
        <shortName>CT47.13</shortName>
    </alternativeName>
</protein>
<organism>
    <name type="scientific">Homo sapiens</name>
    <name type="common">Human</name>
    <dbReference type="NCBI Taxonomy" id="9606"/>
    <lineage>
        <taxon>Eukaryota</taxon>
        <taxon>Metazoa</taxon>
        <taxon>Chordata</taxon>
        <taxon>Craniata</taxon>
        <taxon>Vertebrata</taxon>
        <taxon>Euteleostomi</taxon>
        <taxon>Mammalia</taxon>
        <taxon>Eutheria</taxon>
        <taxon>Euarchontoglires</taxon>
        <taxon>Primates</taxon>
        <taxon>Haplorrhini</taxon>
        <taxon>Catarrhini</taxon>
        <taxon>Hominidae</taxon>
        <taxon>Homo</taxon>
    </lineage>
</organism>
<reference key="1">
    <citation type="journal article" date="2005" name="Nature">
        <title>The DNA sequence of the human X chromosome.</title>
        <authorList>
            <person name="Ross M.T."/>
            <person name="Grafham D.V."/>
            <person name="Coffey A.J."/>
            <person name="Scherer S."/>
            <person name="McLay K."/>
            <person name="Muzny D."/>
            <person name="Platzer M."/>
            <person name="Howell G.R."/>
            <person name="Burrows C."/>
            <person name="Bird C.P."/>
            <person name="Frankish A."/>
            <person name="Lovell F.L."/>
            <person name="Howe K.L."/>
            <person name="Ashurst J.L."/>
            <person name="Fulton R.S."/>
            <person name="Sudbrak R."/>
            <person name="Wen G."/>
            <person name="Jones M.C."/>
            <person name="Hurles M.E."/>
            <person name="Andrews T.D."/>
            <person name="Scott C.E."/>
            <person name="Searle S."/>
            <person name="Ramser J."/>
            <person name="Whittaker A."/>
            <person name="Deadman R."/>
            <person name="Carter N.P."/>
            <person name="Hunt S.E."/>
            <person name="Chen R."/>
            <person name="Cree A."/>
            <person name="Gunaratne P."/>
            <person name="Havlak P."/>
            <person name="Hodgson A."/>
            <person name="Metzker M.L."/>
            <person name="Richards S."/>
            <person name="Scott G."/>
            <person name="Steffen D."/>
            <person name="Sodergren E."/>
            <person name="Wheeler D.A."/>
            <person name="Worley K.C."/>
            <person name="Ainscough R."/>
            <person name="Ambrose K.D."/>
            <person name="Ansari-Lari M.A."/>
            <person name="Aradhya S."/>
            <person name="Ashwell R.I."/>
            <person name="Babbage A.K."/>
            <person name="Bagguley C.L."/>
            <person name="Ballabio A."/>
            <person name="Banerjee R."/>
            <person name="Barker G.E."/>
            <person name="Barlow K.F."/>
            <person name="Barrett I.P."/>
            <person name="Bates K.N."/>
            <person name="Beare D.M."/>
            <person name="Beasley H."/>
            <person name="Beasley O."/>
            <person name="Beck A."/>
            <person name="Bethel G."/>
            <person name="Blechschmidt K."/>
            <person name="Brady N."/>
            <person name="Bray-Allen S."/>
            <person name="Bridgeman A.M."/>
            <person name="Brown A.J."/>
            <person name="Brown M.J."/>
            <person name="Bonnin D."/>
            <person name="Bruford E.A."/>
            <person name="Buhay C."/>
            <person name="Burch P."/>
            <person name="Burford D."/>
            <person name="Burgess J."/>
            <person name="Burrill W."/>
            <person name="Burton J."/>
            <person name="Bye J.M."/>
            <person name="Carder C."/>
            <person name="Carrel L."/>
            <person name="Chako J."/>
            <person name="Chapman J.C."/>
            <person name="Chavez D."/>
            <person name="Chen E."/>
            <person name="Chen G."/>
            <person name="Chen Y."/>
            <person name="Chen Z."/>
            <person name="Chinault C."/>
            <person name="Ciccodicola A."/>
            <person name="Clark S.Y."/>
            <person name="Clarke G."/>
            <person name="Clee C.M."/>
            <person name="Clegg S."/>
            <person name="Clerc-Blankenburg K."/>
            <person name="Clifford K."/>
            <person name="Cobley V."/>
            <person name="Cole C.G."/>
            <person name="Conquer J.S."/>
            <person name="Corby N."/>
            <person name="Connor R.E."/>
            <person name="David R."/>
            <person name="Davies J."/>
            <person name="Davis C."/>
            <person name="Davis J."/>
            <person name="Delgado O."/>
            <person name="Deshazo D."/>
            <person name="Dhami P."/>
            <person name="Ding Y."/>
            <person name="Dinh H."/>
            <person name="Dodsworth S."/>
            <person name="Draper H."/>
            <person name="Dugan-Rocha S."/>
            <person name="Dunham A."/>
            <person name="Dunn M."/>
            <person name="Durbin K.J."/>
            <person name="Dutta I."/>
            <person name="Eades T."/>
            <person name="Ellwood M."/>
            <person name="Emery-Cohen A."/>
            <person name="Errington H."/>
            <person name="Evans K.L."/>
            <person name="Faulkner L."/>
            <person name="Francis F."/>
            <person name="Frankland J."/>
            <person name="Fraser A.E."/>
            <person name="Galgoczy P."/>
            <person name="Gilbert J."/>
            <person name="Gill R."/>
            <person name="Gloeckner G."/>
            <person name="Gregory S.G."/>
            <person name="Gribble S."/>
            <person name="Griffiths C."/>
            <person name="Grocock R."/>
            <person name="Gu Y."/>
            <person name="Gwilliam R."/>
            <person name="Hamilton C."/>
            <person name="Hart E.A."/>
            <person name="Hawes A."/>
            <person name="Heath P.D."/>
            <person name="Heitmann K."/>
            <person name="Hennig S."/>
            <person name="Hernandez J."/>
            <person name="Hinzmann B."/>
            <person name="Ho S."/>
            <person name="Hoffs M."/>
            <person name="Howden P.J."/>
            <person name="Huckle E.J."/>
            <person name="Hume J."/>
            <person name="Hunt P.J."/>
            <person name="Hunt A.R."/>
            <person name="Isherwood J."/>
            <person name="Jacob L."/>
            <person name="Johnson D."/>
            <person name="Jones S."/>
            <person name="de Jong P.J."/>
            <person name="Joseph S.S."/>
            <person name="Keenan S."/>
            <person name="Kelly S."/>
            <person name="Kershaw J.K."/>
            <person name="Khan Z."/>
            <person name="Kioschis P."/>
            <person name="Klages S."/>
            <person name="Knights A.J."/>
            <person name="Kosiura A."/>
            <person name="Kovar-Smith C."/>
            <person name="Laird G.K."/>
            <person name="Langford C."/>
            <person name="Lawlor S."/>
            <person name="Leversha M."/>
            <person name="Lewis L."/>
            <person name="Liu W."/>
            <person name="Lloyd C."/>
            <person name="Lloyd D.M."/>
            <person name="Loulseged H."/>
            <person name="Loveland J.E."/>
            <person name="Lovell J.D."/>
            <person name="Lozado R."/>
            <person name="Lu J."/>
            <person name="Lyne R."/>
            <person name="Ma J."/>
            <person name="Maheshwari M."/>
            <person name="Matthews L.H."/>
            <person name="McDowall J."/>
            <person name="McLaren S."/>
            <person name="McMurray A."/>
            <person name="Meidl P."/>
            <person name="Meitinger T."/>
            <person name="Milne S."/>
            <person name="Miner G."/>
            <person name="Mistry S.L."/>
            <person name="Morgan M."/>
            <person name="Morris S."/>
            <person name="Mueller I."/>
            <person name="Mullikin J.C."/>
            <person name="Nguyen N."/>
            <person name="Nordsiek G."/>
            <person name="Nyakatura G."/>
            <person name="O'dell C.N."/>
            <person name="Okwuonu G."/>
            <person name="Palmer S."/>
            <person name="Pandian R."/>
            <person name="Parker D."/>
            <person name="Parrish J."/>
            <person name="Pasternak S."/>
            <person name="Patel D."/>
            <person name="Pearce A.V."/>
            <person name="Pearson D.M."/>
            <person name="Pelan S.E."/>
            <person name="Perez L."/>
            <person name="Porter K.M."/>
            <person name="Ramsey Y."/>
            <person name="Reichwald K."/>
            <person name="Rhodes S."/>
            <person name="Ridler K.A."/>
            <person name="Schlessinger D."/>
            <person name="Schueler M.G."/>
            <person name="Sehra H.K."/>
            <person name="Shaw-Smith C."/>
            <person name="Shen H."/>
            <person name="Sheridan E.M."/>
            <person name="Shownkeen R."/>
            <person name="Skuce C.D."/>
            <person name="Smith M.L."/>
            <person name="Sotheran E.C."/>
            <person name="Steingruber H.E."/>
            <person name="Steward C.A."/>
            <person name="Storey R."/>
            <person name="Swann R.M."/>
            <person name="Swarbreck D."/>
            <person name="Tabor P.E."/>
            <person name="Taudien S."/>
            <person name="Taylor T."/>
            <person name="Teague B."/>
            <person name="Thomas K."/>
            <person name="Thorpe A."/>
            <person name="Timms K."/>
            <person name="Tracey A."/>
            <person name="Trevanion S."/>
            <person name="Tromans A.C."/>
            <person name="d'Urso M."/>
            <person name="Verduzco D."/>
            <person name="Villasana D."/>
            <person name="Waldron L."/>
            <person name="Wall M."/>
            <person name="Wang Q."/>
            <person name="Warren J."/>
            <person name="Warry G.L."/>
            <person name="Wei X."/>
            <person name="West A."/>
            <person name="Whitehead S.L."/>
            <person name="Whiteley M.N."/>
            <person name="Wilkinson J.E."/>
            <person name="Willey D.L."/>
            <person name="Williams G."/>
            <person name="Williams L."/>
            <person name="Williamson A."/>
            <person name="Williamson H."/>
            <person name="Wilming L."/>
            <person name="Woodmansey R.L."/>
            <person name="Wray P.W."/>
            <person name="Yen J."/>
            <person name="Zhang J."/>
            <person name="Zhou J."/>
            <person name="Zoghbi H."/>
            <person name="Zorilla S."/>
            <person name="Buck D."/>
            <person name="Reinhardt R."/>
            <person name="Poustka A."/>
            <person name="Rosenthal A."/>
            <person name="Lehrach H."/>
            <person name="Meindl A."/>
            <person name="Minx P.J."/>
            <person name="Hillier L.W."/>
            <person name="Willard H.F."/>
            <person name="Wilson R.K."/>
            <person name="Waterston R.H."/>
            <person name="Rice C.M."/>
            <person name="Vaudin M."/>
            <person name="Coulson A."/>
            <person name="Nelson D.L."/>
            <person name="Weinstock G."/>
            <person name="Sulston J.E."/>
            <person name="Durbin R.M."/>
            <person name="Hubbard T."/>
            <person name="Gibbs R.A."/>
            <person name="Beck S."/>
            <person name="Rogers J."/>
            <person name="Bentley D.R."/>
        </authorList>
    </citation>
    <scope>NUCLEOTIDE SEQUENCE [LARGE SCALE GENOMIC DNA]</scope>
</reference>
<reference key="2">
    <citation type="journal article" date="2006" name="Genes Chromosomes Cancer">
        <title>Identification of a new cancer/testis gene family, CT47, among expressed multicopy genes on the human X chromosome.</title>
        <authorList>
            <person name="Chen Y.-T."/>
            <person name="Iseli C."/>
            <person name="Venditti C.A."/>
            <person name="Old L.J."/>
            <person name="Simpson A.J.G."/>
            <person name="Jongeneel C.V."/>
        </authorList>
    </citation>
    <scope>IDENTIFICATION</scope>
</reference>
<reference key="3">
    <citation type="journal article" date="2012" name="Transl. Psychiatry">
        <title>Analysis of the chromosome X exome in patients with autism spectrum disorders identified novel candidate genes, including TMLHE.</title>
        <authorList>
            <person name="Nava C."/>
            <person name="Lamari F."/>
            <person name="Heron D."/>
            <person name="Mignot C."/>
            <person name="Rastetter A."/>
            <person name="Keren B."/>
            <person name="Cohen D."/>
            <person name="Faudet A."/>
            <person name="Bouteiller D."/>
            <person name="Gilleron M."/>
            <person name="Jacquette A."/>
            <person name="Whalen S."/>
            <person name="Afenjar A."/>
            <person name="Perisse D."/>
            <person name="Laurent C."/>
            <person name="Dupuits C."/>
            <person name="Gautier C."/>
            <person name="Gerard M."/>
            <person name="Huguet G."/>
            <person name="Caillet S."/>
            <person name="Leheup B."/>
            <person name="Leboyer M."/>
            <person name="Gillberg C."/>
            <person name="Delorme R."/>
            <person name="Bourgeron T."/>
            <person name="Brice A."/>
            <person name="Depienne C."/>
        </authorList>
    </citation>
    <scope>VARIANT GLU-99 DEL</scope>
</reference>
<sequence>MSATGDRHPTQGDQEAPVSQEGAQAEAAGAGNQEGGDSGPDSSDMVPAAEVVGVAGPVEGLGEEEGEQAAGLAAVPQGGSAEEDSDIGPATEEEEEEEEGNEAANFDLAVATRRYPAAGIGFVFLYLVHSLLRRLYHNDHIQIANRHLSRLMVGPHAAVPNLWDNPPLLLLSQRLGAGAAAPEGEGLGLIQEAASVQEAASVPEPAVPADLAEMAREPAEEAADEKPPEEAAEEKLTEEATEEPAAEEPTSEEAVAPEEVTKSQPEKWDEEAQDAAGEEEKEQEKEKDVENKVKNSKGT</sequence>
<accession>P0C2W7</accession>
<accession>A6NM97</accession>
<proteinExistence type="evidence at protein level"/>
<keyword id="KW-0175">Coiled coil</keyword>
<keyword id="KW-1267">Proteomics identification</keyword>
<keyword id="KW-1185">Reference proteome</keyword>
<name>CT47B_HUMAN</name>
<feature type="chain" id="PRO_0000286433" description="Cancer/testis antigen family 47 member B1">
    <location>
        <begin position="1"/>
        <end position="299"/>
    </location>
</feature>
<feature type="region of interest" description="Disordered" evidence="2">
    <location>
        <begin position="1"/>
        <end position="102"/>
    </location>
</feature>
<feature type="region of interest" description="Disordered" evidence="2">
    <location>
        <begin position="215"/>
        <end position="299"/>
    </location>
</feature>
<feature type="coiled-coil region" evidence="1">
    <location>
        <begin position="270"/>
        <end position="298"/>
    </location>
</feature>
<feature type="compositionally biased region" description="Basic and acidic residues" evidence="2">
    <location>
        <begin position="1"/>
        <end position="10"/>
    </location>
</feature>
<feature type="compositionally biased region" description="Low complexity" evidence="2">
    <location>
        <begin position="20"/>
        <end position="31"/>
    </location>
</feature>
<feature type="compositionally biased region" description="Low complexity" evidence="2">
    <location>
        <begin position="46"/>
        <end position="60"/>
    </location>
</feature>
<feature type="compositionally biased region" description="Acidic residues" evidence="2">
    <location>
        <begin position="81"/>
        <end position="101"/>
    </location>
</feature>
<feature type="compositionally biased region" description="Basic and acidic residues" evidence="2">
    <location>
        <begin position="215"/>
        <end position="238"/>
    </location>
</feature>
<feature type="compositionally biased region" description="Acidic residues" evidence="2">
    <location>
        <begin position="239"/>
        <end position="251"/>
    </location>
</feature>
<feature type="compositionally biased region" description="Acidic residues" evidence="2">
    <location>
        <begin position="268"/>
        <end position="281"/>
    </location>
</feature>
<feature type="compositionally biased region" description="Basic and acidic residues" evidence="2">
    <location>
        <begin position="282"/>
        <end position="293"/>
    </location>
</feature>
<feature type="sequence variant" id="VAR_076267" evidence="3">
    <location>
        <position position="99"/>
    </location>
</feature>
<gene>
    <name evidence="5" type="primary">CT47B1</name>
    <name type="synonym">CT47.13</name>
</gene>
<comment type="similarity">
    <text evidence="4">Belongs to the CT47 family.</text>
</comment>